<organism>
    <name type="scientific">Streptococcus pneumoniae serotype 4 (strain ATCC BAA-334 / TIGR4)</name>
    <dbReference type="NCBI Taxonomy" id="170187"/>
    <lineage>
        <taxon>Bacteria</taxon>
        <taxon>Bacillati</taxon>
        <taxon>Bacillota</taxon>
        <taxon>Bacilli</taxon>
        <taxon>Lactobacillales</taxon>
        <taxon>Streptococcaceae</taxon>
        <taxon>Streptococcus</taxon>
    </lineage>
</organism>
<gene>
    <name evidence="1" type="primary">apt</name>
    <name type="ordered locus">SP_1577</name>
</gene>
<protein>
    <recommendedName>
        <fullName evidence="1">Adenine phosphoribosyltransferase</fullName>
        <shortName evidence="1">APRT</shortName>
        <ecNumber evidence="1">2.4.2.7</ecNumber>
    </recommendedName>
</protein>
<comment type="function">
    <text evidence="1">Catalyzes a salvage reaction resulting in the formation of AMP, that is energically less costly than de novo synthesis.</text>
</comment>
<comment type="catalytic activity">
    <reaction evidence="1">
        <text>AMP + diphosphate = 5-phospho-alpha-D-ribose 1-diphosphate + adenine</text>
        <dbReference type="Rhea" id="RHEA:16609"/>
        <dbReference type="ChEBI" id="CHEBI:16708"/>
        <dbReference type="ChEBI" id="CHEBI:33019"/>
        <dbReference type="ChEBI" id="CHEBI:58017"/>
        <dbReference type="ChEBI" id="CHEBI:456215"/>
        <dbReference type="EC" id="2.4.2.7"/>
    </reaction>
</comment>
<comment type="pathway">
    <text evidence="1">Purine metabolism; AMP biosynthesis via salvage pathway; AMP from adenine: step 1/1.</text>
</comment>
<comment type="subunit">
    <text evidence="1">Homodimer.</text>
</comment>
<comment type="interaction">
    <interactant intactId="EBI-2207316">
        <id>P63544</id>
    </interactant>
    <interactant intactId="EBI-2207290">
        <id>P63588</id>
        <label>aroD</label>
    </interactant>
    <organismsDiffer>false</organismsDiffer>
    <experiments>2</experiments>
</comment>
<comment type="interaction">
    <interactant intactId="EBI-2207316">
        <id>P63544</id>
    </interactant>
    <interactant intactId="EBI-2207023">
        <id>Q97SE7</id>
        <label>gatB</label>
    </interactant>
    <organismsDiffer>false</organismsDiffer>
    <experiments>2</experiments>
</comment>
<comment type="interaction">
    <interactant intactId="EBI-2207316">
        <id>P63544</id>
    </interactant>
    <interactant intactId="EBI-2207053">
        <id>Q97SE5</id>
        <label>gatC</label>
    </interactant>
    <organismsDiffer>false</organismsDiffer>
    <experiments>2</experiments>
</comment>
<comment type="interaction">
    <interactant intactId="EBI-2207316">
        <id>P63544</id>
    </interactant>
    <interactant intactId="EBI-2207395">
        <id>P0A335</id>
        <label>groEL</label>
    </interactant>
    <organismsDiffer>false</organismsDiffer>
    <experiments>2</experiments>
</comment>
<comment type="interaction">
    <interactant intactId="EBI-2207316">
        <id>P63544</id>
    </interactant>
    <interactant intactId="EBI-2206949">
        <id>Q97NV3</id>
        <label>groES</label>
    </interactant>
    <organismsDiffer>false</organismsDiffer>
    <experiments>2</experiments>
</comment>
<comment type="interaction">
    <interactant intactId="EBI-2207316">
        <id>P63544</id>
    </interactant>
    <interactant intactId="EBI-2207065">
        <id>Q97S73</id>
        <label>grpE</label>
    </interactant>
    <organismsDiffer>false</organismsDiffer>
    <experiments>2</experiments>
</comment>
<comment type="interaction">
    <interactant intactId="EBI-2207316">
        <id>P63544</id>
    </interactant>
    <interactant intactId="EBI-2207260">
        <id>Q97Q68</id>
        <label>mecA</label>
    </interactant>
    <organismsDiffer>false</organismsDiffer>
    <experiments>2</experiments>
</comment>
<comment type="interaction">
    <interactant intactId="EBI-2207316">
        <id>P63544</id>
    </interactant>
    <interactant intactId="EBI-2207248">
        <id>P65946</id>
        <label>pyrR</label>
    </interactant>
    <organismsDiffer>false</organismsDiffer>
    <experiments>2</experiments>
</comment>
<comment type="interaction">
    <interactant intactId="EBI-2207316">
        <id>P63544</id>
    </interactant>
    <interactant intactId="EBI-2206983">
        <id>Q97SR4</id>
        <label>uppS</label>
    </interactant>
    <organismsDiffer>false</organismsDiffer>
    <experiments>2</experiments>
</comment>
<comment type="interaction">
    <interactant intactId="EBI-2207316">
        <id>P63544</id>
    </interactant>
    <interactant intactId="EBI-2207218">
        <id>Q97QP2</id>
        <label>xerS</label>
    </interactant>
    <organismsDiffer>false</organismsDiffer>
    <experiments>2</experiments>
</comment>
<comment type="subcellular location">
    <subcellularLocation>
        <location evidence="1">Cytoplasm</location>
    </subcellularLocation>
</comment>
<comment type="similarity">
    <text evidence="1">Belongs to the purine/pyrimidine phosphoribosyltransferase family.</text>
</comment>
<dbReference type="EC" id="2.4.2.7" evidence="1"/>
<dbReference type="EMBL" id="AE005672">
    <property type="protein sequence ID" value="AAK75663.1"/>
    <property type="molecule type" value="Genomic_DNA"/>
</dbReference>
<dbReference type="PIR" id="F95183">
    <property type="entry name" value="F95183"/>
</dbReference>
<dbReference type="RefSeq" id="WP_001049323.1">
    <property type="nucleotide sequence ID" value="NZ_CP155539.1"/>
</dbReference>
<dbReference type="SMR" id="P63544"/>
<dbReference type="IntAct" id="P63544">
    <property type="interactions" value="10"/>
</dbReference>
<dbReference type="PaxDb" id="170187-SP_1577"/>
<dbReference type="EnsemblBacteria" id="AAK75663">
    <property type="protein sequence ID" value="AAK75663"/>
    <property type="gene ID" value="SP_1577"/>
</dbReference>
<dbReference type="KEGG" id="spn:SP_1577"/>
<dbReference type="eggNOG" id="COG0503">
    <property type="taxonomic scope" value="Bacteria"/>
</dbReference>
<dbReference type="PhylomeDB" id="P63544"/>
<dbReference type="BioCyc" id="SPNE170187:G1FZB-1596-MONOMER"/>
<dbReference type="UniPathway" id="UPA00588">
    <property type="reaction ID" value="UER00646"/>
</dbReference>
<dbReference type="Proteomes" id="UP000000585">
    <property type="component" value="Chromosome"/>
</dbReference>
<dbReference type="GO" id="GO:0005737">
    <property type="term" value="C:cytoplasm"/>
    <property type="evidence" value="ECO:0007669"/>
    <property type="project" value="UniProtKB-SubCell"/>
</dbReference>
<dbReference type="GO" id="GO:0002055">
    <property type="term" value="F:adenine binding"/>
    <property type="evidence" value="ECO:0007669"/>
    <property type="project" value="TreeGrafter"/>
</dbReference>
<dbReference type="GO" id="GO:0003999">
    <property type="term" value="F:adenine phosphoribosyltransferase activity"/>
    <property type="evidence" value="ECO:0007669"/>
    <property type="project" value="UniProtKB-UniRule"/>
</dbReference>
<dbReference type="GO" id="GO:0016208">
    <property type="term" value="F:AMP binding"/>
    <property type="evidence" value="ECO:0007669"/>
    <property type="project" value="TreeGrafter"/>
</dbReference>
<dbReference type="GO" id="GO:0006168">
    <property type="term" value="P:adenine salvage"/>
    <property type="evidence" value="ECO:0007669"/>
    <property type="project" value="InterPro"/>
</dbReference>
<dbReference type="GO" id="GO:0044209">
    <property type="term" value="P:AMP salvage"/>
    <property type="evidence" value="ECO:0007669"/>
    <property type="project" value="UniProtKB-UniRule"/>
</dbReference>
<dbReference type="GO" id="GO:0006166">
    <property type="term" value="P:purine ribonucleoside salvage"/>
    <property type="evidence" value="ECO:0007669"/>
    <property type="project" value="UniProtKB-KW"/>
</dbReference>
<dbReference type="CDD" id="cd06223">
    <property type="entry name" value="PRTases_typeI"/>
    <property type="match status" value="1"/>
</dbReference>
<dbReference type="FunFam" id="3.40.50.2020:FF:000004">
    <property type="entry name" value="Adenine phosphoribosyltransferase"/>
    <property type="match status" value="1"/>
</dbReference>
<dbReference type="Gene3D" id="3.40.50.2020">
    <property type="match status" value="1"/>
</dbReference>
<dbReference type="HAMAP" id="MF_00004">
    <property type="entry name" value="Aden_phosphoribosyltr"/>
    <property type="match status" value="1"/>
</dbReference>
<dbReference type="InterPro" id="IPR005764">
    <property type="entry name" value="Ade_phspho_trans"/>
</dbReference>
<dbReference type="InterPro" id="IPR000836">
    <property type="entry name" value="PRibTrfase_dom"/>
</dbReference>
<dbReference type="InterPro" id="IPR029057">
    <property type="entry name" value="PRTase-like"/>
</dbReference>
<dbReference type="InterPro" id="IPR050054">
    <property type="entry name" value="UPRTase/APRTase"/>
</dbReference>
<dbReference type="NCBIfam" id="TIGR01090">
    <property type="entry name" value="apt"/>
    <property type="match status" value="1"/>
</dbReference>
<dbReference type="NCBIfam" id="NF002633">
    <property type="entry name" value="PRK02304.1-2"/>
    <property type="match status" value="1"/>
</dbReference>
<dbReference type="NCBIfam" id="NF002634">
    <property type="entry name" value="PRK02304.1-3"/>
    <property type="match status" value="1"/>
</dbReference>
<dbReference type="NCBIfam" id="NF002636">
    <property type="entry name" value="PRK02304.1-5"/>
    <property type="match status" value="1"/>
</dbReference>
<dbReference type="PANTHER" id="PTHR32315">
    <property type="entry name" value="ADENINE PHOSPHORIBOSYLTRANSFERASE"/>
    <property type="match status" value="1"/>
</dbReference>
<dbReference type="PANTHER" id="PTHR32315:SF3">
    <property type="entry name" value="ADENINE PHOSPHORIBOSYLTRANSFERASE"/>
    <property type="match status" value="1"/>
</dbReference>
<dbReference type="Pfam" id="PF00156">
    <property type="entry name" value="Pribosyltran"/>
    <property type="match status" value="1"/>
</dbReference>
<dbReference type="SUPFAM" id="SSF53271">
    <property type="entry name" value="PRTase-like"/>
    <property type="match status" value="1"/>
</dbReference>
<dbReference type="PROSITE" id="PS00103">
    <property type="entry name" value="PUR_PYR_PR_TRANSFER"/>
    <property type="match status" value="1"/>
</dbReference>
<name>APT_STRPN</name>
<evidence type="ECO:0000255" key="1">
    <source>
        <dbReference type="HAMAP-Rule" id="MF_00004"/>
    </source>
</evidence>
<feature type="chain" id="PRO_0000149465" description="Adenine phosphoribosyltransferase">
    <location>
        <begin position="1"/>
        <end position="170"/>
    </location>
</feature>
<keyword id="KW-0963">Cytoplasm</keyword>
<keyword id="KW-0328">Glycosyltransferase</keyword>
<keyword id="KW-0660">Purine salvage</keyword>
<keyword id="KW-1185">Reference proteome</keyword>
<keyword id="KW-0808">Transferase</keyword>
<sequence>MNLKDYIATIENYPKEGITFRDISPLMADGNAYSYAVREIVQYATDKKVDMIVGPEARGFIVGCPVAFELGIGFAPVRKPGKLPREVISADYEKEYGVDTLTMHADAIKPGQRVLIVDDLLATGGTVKATIEMIEKLGGVMAGCAFLVELDELNGREKIGDYDYKVLMHY</sequence>
<accession>P63544</accession>
<accession>Q97PM8</accession>
<reference key="1">
    <citation type="journal article" date="2001" name="Science">
        <title>Complete genome sequence of a virulent isolate of Streptococcus pneumoniae.</title>
        <authorList>
            <person name="Tettelin H."/>
            <person name="Nelson K.E."/>
            <person name="Paulsen I.T."/>
            <person name="Eisen J.A."/>
            <person name="Read T.D."/>
            <person name="Peterson S.N."/>
            <person name="Heidelberg J.F."/>
            <person name="DeBoy R.T."/>
            <person name="Haft D.H."/>
            <person name="Dodson R.J."/>
            <person name="Durkin A.S."/>
            <person name="Gwinn M.L."/>
            <person name="Kolonay J.F."/>
            <person name="Nelson W.C."/>
            <person name="Peterson J.D."/>
            <person name="Umayam L.A."/>
            <person name="White O."/>
            <person name="Salzberg S.L."/>
            <person name="Lewis M.R."/>
            <person name="Radune D."/>
            <person name="Holtzapple E.K."/>
            <person name="Khouri H.M."/>
            <person name="Wolf A.M."/>
            <person name="Utterback T.R."/>
            <person name="Hansen C.L."/>
            <person name="McDonald L.A."/>
            <person name="Feldblyum T.V."/>
            <person name="Angiuoli S.V."/>
            <person name="Dickinson T."/>
            <person name="Hickey E.K."/>
            <person name="Holt I.E."/>
            <person name="Loftus B.J."/>
            <person name="Yang F."/>
            <person name="Smith H.O."/>
            <person name="Venter J.C."/>
            <person name="Dougherty B.A."/>
            <person name="Morrison D.A."/>
            <person name="Hollingshead S.K."/>
            <person name="Fraser C.M."/>
        </authorList>
    </citation>
    <scope>NUCLEOTIDE SEQUENCE [LARGE SCALE GENOMIC DNA]</scope>
    <source>
        <strain>ATCC BAA-334 / TIGR4</strain>
    </source>
</reference>
<proteinExistence type="evidence at protein level"/>